<dbReference type="EMBL" id="AB016605">
    <property type="protein sequence ID" value="BAA77210.1"/>
    <property type="molecule type" value="Genomic_DNA"/>
</dbReference>
<dbReference type="EMBL" id="AB016249">
    <property type="protein sequence ID" value="BAA77209.1"/>
    <property type="molecule type" value="mRNA"/>
</dbReference>
<dbReference type="RefSeq" id="NP_001036836.1">
    <property type="nucleotide sequence ID" value="NM_001043371.1"/>
</dbReference>
<dbReference type="SMR" id="Q9XTN0"/>
<dbReference type="FunCoup" id="Q9XTN0">
    <property type="interactions" value="45"/>
</dbReference>
<dbReference type="STRING" id="7091.Q9XTN0"/>
<dbReference type="PaxDb" id="7091-BGIBMGA008038-TA"/>
<dbReference type="EnsemblMetazoa" id="NM_001043371.1">
    <property type="protein sequence ID" value="NP_001036836.1"/>
    <property type="gene ID" value="GeneID_692372"/>
</dbReference>
<dbReference type="GeneID" id="692372"/>
<dbReference type="KEGG" id="bmor:692372"/>
<dbReference type="CTD" id="692372"/>
<dbReference type="eggNOG" id="ENOG502S2KY">
    <property type="taxonomic scope" value="Eukaryota"/>
</dbReference>
<dbReference type="HOGENOM" id="CLU_037559_3_2_1"/>
<dbReference type="InParanoid" id="Q9XTN0"/>
<dbReference type="OrthoDB" id="244049at7088"/>
<dbReference type="Proteomes" id="UP000005204">
    <property type="component" value="Unassembled WGS sequence"/>
</dbReference>
<dbReference type="GO" id="GO:0008745">
    <property type="term" value="F:N-acetylmuramoyl-L-alanine amidase activity"/>
    <property type="evidence" value="ECO:0007669"/>
    <property type="project" value="InterPro"/>
</dbReference>
<dbReference type="GO" id="GO:0042834">
    <property type="term" value="F:peptidoglycan binding"/>
    <property type="evidence" value="ECO:0000250"/>
    <property type="project" value="UniProtKB"/>
</dbReference>
<dbReference type="GO" id="GO:0008270">
    <property type="term" value="F:zinc ion binding"/>
    <property type="evidence" value="ECO:0007669"/>
    <property type="project" value="InterPro"/>
</dbReference>
<dbReference type="GO" id="GO:0045087">
    <property type="term" value="P:innate immune response"/>
    <property type="evidence" value="ECO:0007669"/>
    <property type="project" value="UniProtKB-KW"/>
</dbReference>
<dbReference type="GO" id="GO:0009253">
    <property type="term" value="P:peptidoglycan catabolic process"/>
    <property type="evidence" value="ECO:0007669"/>
    <property type="project" value="InterPro"/>
</dbReference>
<dbReference type="CDD" id="cd06583">
    <property type="entry name" value="PGRP"/>
    <property type="match status" value="1"/>
</dbReference>
<dbReference type="FunFam" id="3.40.80.10:FF:000001">
    <property type="entry name" value="Peptidoglycan recognition protein 1"/>
    <property type="match status" value="1"/>
</dbReference>
<dbReference type="Gene3D" id="3.40.80.10">
    <property type="entry name" value="Peptidoglycan recognition protein-like"/>
    <property type="match status" value="1"/>
</dbReference>
<dbReference type="InterPro" id="IPR036505">
    <property type="entry name" value="Amidase/PGRP_sf"/>
</dbReference>
<dbReference type="InterPro" id="IPR002502">
    <property type="entry name" value="Amidase_domain"/>
</dbReference>
<dbReference type="InterPro" id="IPR017331">
    <property type="entry name" value="Peptidoglycan_recognition"/>
</dbReference>
<dbReference type="InterPro" id="IPR015510">
    <property type="entry name" value="PGRP"/>
</dbReference>
<dbReference type="InterPro" id="IPR006619">
    <property type="entry name" value="PGRP_domain_met/bac"/>
</dbReference>
<dbReference type="PANTHER" id="PTHR11022">
    <property type="entry name" value="PEPTIDOGLYCAN RECOGNITION PROTEIN"/>
    <property type="match status" value="1"/>
</dbReference>
<dbReference type="PANTHER" id="PTHR11022:SF74">
    <property type="entry name" value="PEPTIDOGLYCAN-RECOGNITION PROTEIN SA"/>
    <property type="match status" value="1"/>
</dbReference>
<dbReference type="Pfam" id="PF01510">
    <property type="entry name" value="Amidase_2"/>
    <property type="match status" value="1"/>
</dbReference>
<dbReference type="PIRSF" id="PIRSF037945">
    <property type="entry name" value="PGRPs"/>
    <property type="match status" value="1"/>
</dbReference>
<dbReference type="SMART" id="SM00644">
    <property type="entry name" value="Ami_2"/>
    <property type="match status" value="1"/>
</dbReference>
<dbReference type="SMART" id="SM00701">
    <property type="entry name" value="PGRP"/>
    <property type="match status" value="1"/>
</dbReference>
<dbReference type="SUPFAM" id="SSF55846">
    <property type="entry name" value="N-acetylmuramoyl-L-alanine amidase-like"/>
    <property type="match status" value="1"/>
</dbReference>
<sequence>MARLHSAVVLALALSSLLTEIAADCDVVSKKQWDGLIPVHVSYLARPVSLVIVQHTVTPFCRTDAGCEELVRNIQTNHMEALQYWDIGPSFLVGGNGKVYEGSGWLHVGAHTYGYNSRSIGVAFIGNFNTDEPSGAMLEALRSLLRCGVERGHLAGDYRAVAHRQLIASESPGRKLYNQIRRWPEWLENVDSIKNA</sequence>
<comment type="function">
    <text evidence="3">Binds specifically to peptidoglycan and triggers the propenoloxidase cascade which is an important insect defense mechanism.</text>
</comment>
<comment type="subunit">
    <text evidence="5">Monomer.</text>
</comment>
<comment type="tissue specificity">
    <text evidence="2">Constitutively expressed in fat body, epithelial cells and hemocytes. Not detected in Malpighian tubules, silk gland or midgut.</text>
</comment>
<comment type="induction">
    <text evidence="2">By bacterial challenge.</text>
</comment>
<comment type="similarity">
    <text evidence="4">Belongs to the N-acetylmuramoyl-L-alanine amidase 2 family.</text>
</comment>
<keyword id="KW-0903">Direct protein sequencing</keyword>
<keyword id="KW-1015">Disulfide bond</keyword>
<keyword id="KW-0391">Immunity</keyword>
<keyword id="KW-0399">Innate immunity</keyword>
<keyword id="KW-1185">Reference proteome</keyword>
<keyword id="KW-0732">Signal</keyword>
<reference key="1">
    <citation type="journal article" date="1999" name="J. Biol. Chem.">
        <title>A pattern recognition protein for peptidoglycan. Cloning the cDNA and the gene of the silkworm, Bombyx mori.</title>
        <authorList>
            <person name="Ochiai M."/>
            <person name="Ashida M."/>
        </authorList>
    </citation>
    <scope>NUCLEOTIDE SEQUENCE [GENOMIC DNA / MRNA]</scope>
    <scope>PROTEIN SEQUENCE OF 24-72; 99-118; 147-159 AND 183-196</scope>
    <scope>TISSUE SPECIFICITY</scope>
    <scope>INDUCTION</scope>
    <source>
        <strain>Kinshu X Showa</strain>
        <tissue>Fat body</tissue>
    </source>
</reference>
<reference key="2">
    <citation type="journal article" date="1996" name="J. Biol. Chem.">
        <title>Purification of a peptidoglycan recognition protein from hemolymph of the silkworm, Bombyx mori.</title>
        <authorList>
            <person name="Yoshida H."/>
            <person name="Kinoshita K."/>
            <person name="Ashida M."/>
        </authorList>
    </citation>
    <scope>PROTEIN SEQUENCE OF 24-43</scope>
    <scope>FUNCTION</scope>
    <scope>SUBUNIT</scope>
    <source>
        <tissue>Hemolymph</tissue>
    </source>
</reference>
<feature type="signal peptide" evidence="2 3">
    <location>
        <begin position="1"/>
        <end position="23"/>
    </location>
</feature>
<feature type="chain" id="PRO_0000023904" description="Peptidoglycan recognition protein">
    <location>
        <begin position="24"/>
        <end position="196"/>
    </location>
</feature>
<feature type="domain" description="N-acetylmuramoyl-L-alanine amidase" evidence="1">
    <location>
        <begin position="46"/>
        <end position="173"/>
    </location>
</feature>
<feature type="disulfide bond" evidence="1">
    <location>
        <begin position="25"/>
        <end position="147"/>
    </location>
</feature>
<feature type="disulfide bond" evidence="1">
    <location>
        <begin position="61"/>
        <end position="67"/>
    </location>
</feature>
<evidence type="ECO:0000255" key="1"/>
<evidence type="ECO:0000269" key="2">
    <source>
    </source>
</evidence>
<evidence type="ECO:0000269" key="3">
    <source>
    </source>
</evidence>
<evidence type="ECO:0000305" key="4"/>
<evidence type="ECO:0000305" key="5">
    <source>
    </source>
</evidence>
<accession>Q9XTN0</accession>
<accession>Q9TWD4</accession>
<organism>
    <name type="scientific">Bombyx mori</name>
    <name type="common">Silk moth</name>
    <dbReference type="NCBI Taxonomy" id="7091"/>
    <lineage>
        <taxon>Eukaryota</taxon>
        <taxon>Metazoa</taxon>
        <taxon>Ecdysozoa</taxon>
        <taxon>Arthropoda</taxon>
        <taxon>Hexapoda</taxon>
        <taxon>Insecta</taxon>
        <taxon>Pterygota</taxon>
        <taxon>Neoptera</taxon>
        <taxon>Endopterygota</taxon>
        <taxon>Lepidoptera</taxon>
        <taxon>Glossata</taxon>
        <taxon>Ditrysia</taxon>
        <taxon>Bombycoidea</taxon>
        <taxon>Bombycidae</taxon>
        <taxon>Bombycinae</taxon>
        <taxon>Bombyx</taxon>
    </lineage>
</organism>
<proteinExistence type="evidence at protein level"/>
<protein>
    <recommendedName>
        <fullName>Peptidoglycan recognition protein</fullName>
    </recommendedName>
</protein>
<name>PGRP_BOMMO</name>